<name>NETO2_MOUSE</name>
<protein>
    <recommendedName>
        <fullName>Neuropilin and tolloid-like protein 2</fullName>
    </recommendedName>
    <alternativeName>
        <fullName>Brain-specific transmembrane protein containing 2 CUB and 1 LDL-receptor class A domains protein 2</fullName>
    </alternativeName>
</protein>
<feature type="signal peptide" evidence="1">
    <location>
        <begin position="1"/>
        <end position="22"/>
    </location>
</feature>
<feature type="chain" id="PRO_0000021802" description="Neuropilin and tolloid-like protein 2">
    <location>
        <begin position="23"/>
        <end position="525"/>
    </location>
</feature>
<feature type="topological domain" description="Extracellular" evidence="2">
    <location>
        <begin position="23"/>
        <end position="347"/>
    </location>
</feature>
<feature type="transmembrane region" description="Helical" evidence="2">
    <location>
        <begin position="348"/>
        <end position="368"/>
    </location>
</feature>
<feature type="topological domain" description="Cytoplasmic" evidence="2">
    <location>
        <begin position="369"/>
        <end position="525"/>
    </location>
</feature>
<feature type="domain" description="CUB 1" evidence="3">
    <location>
        <begin position="45"/>
        <end position="159"/>
    </location>
</feature>
<feature type="domain" description="CUB 2" evidence="3">
    <location>
        <begin position="177"/>
        <end position="292"/>
    </location>
</feature>
<feature type="domain" description="LDL-receptor class A" evidence="4">
    <location>
        <begin position="296"/>
        <end position="332"/>
    </location>
</feature>
<feature type="modified residue" description="Phosphoserine" evidence="9">
    <location>
        <position position="409"/>
    </location>
</feature>
<feature type="glycosylation site" description="N-linked (GlcNAc...) asparagine" evidence="2">
    <location>
        <position position="311"/>
    </location>
</feature>
<feature type="disulfide bond" evidence="1">
    <location>
        <begin position="45"/>
        <end position="72"/>
    </location>
</feature>
<feature type="disulfide bond" evidence="1">
    <location>
        <begin position="100"/>
        <end position="122"/>
    </location>
</feature>
<feature type="disulfide bond" evidence="1">
    <location>
        <begin position="177"/>
        <end position="207"/>
    </location>
</feature>
<feature type="disulfide bond" evidence="1">
    <location>
        <begin position="234"/>
        <end position="256"/>
    </location>
</feature>
<feature type="disulfide bond" evidence="1">
    <location>
        <begin position="297"/>
        <end position="309"/>
    </location>
</feature>
<feature type="disulfide bond" evidence="1">
    <location>
        <begin position="304"/>
        <end position="322"/>
    </location>
</feature>
<feature type="disulfide bond" evidence="1">
    <location>
        <begin position="316"/>
        <end position="331"/>
    </location>
</feature>
<feature type="splice variant" id="VSP_012858" description="In isoform 2." evidence="7">
    <original>MALEQLCAVLK</original>
    <variation>MGTNAVTHSQTLGRAWGILWKNKDGMSQNDQGHHKKTYRINLPGPI</variation>
    <location>
        <begin position="1"/>
        <end position="11"/>
    </location>
</feature>
<feature type="splice variant" id="VSP_012859" description="In isoform 2." evidence="7">
    <location>
        <begin position="169"/>
        <end position="175"/>
    </location>
</feature>
<organism>
    <name type="scientific">Mus musculus</name>
    <name type="common">Mouse</name>
    <dbReference type="NCBI Taxonomy" id="10090"/>
    <lineage>
        <taxon>Eukaryota</taxon>
        <taxon>Metazoa</taxon>
        <taxon>Chordata</taxon>
        <taxon>Craniata</taxon>
        <taxon>Vertebrata</taxon>
        <taxon>Euteleostomi</taxon>
        <taxon>Mammalia</taxon>
        <taxon>Eutheria</taxon>
        <taxon>Euarchontoglires</taxon>
        <taxon>Glires</taxon>
        <taxon>Rodentia</taxon>
        <taxon>Myomorpha</taxon>
        <taxon>Muroidea</taxon>
        <taxon>Muridae</taxon>
        <taxon>Murinae</taxon>
        <taxon>Mus</taxon>
        <taxon>Mus</taxon>
    </lineage>
</organism>
<sequence>MALEQLCAVLKVLLITVLVVEGIAVAQKTQDGQNIGIKHIPATQCGIWVRTSNGGHFASPNYPDSYPPNKECIYILEAAPRQRIELTFDERYYIEPSFECRFDHLEIRDGPFGFSPLIDRYCGMKSPALIRSTGRFMWIKFSSDEELEGLGFRAKYSFIPDPDFTYLGGILNPIPDCQFELSGADGIVRSSQVEQEEKTKPGQAVDCIWTIKATPKAKIYLRFLDYQMEHSNECKRNFVAVYDGSSAIENLKAKFCSTVANDVMLKTGVGVIRMWADEGSRLSRFRMLFTSFVEPPCTSSTFFCHSNMCINNSLVCNGVQNCAYPWDENHCKEKKKAGLFEQITKTHGTIIGITSGIVLVLLIISILVQVKQPRKKVMACKTAFNKTGFQEVFDPPHYELFSLREKEISADLADLSEELDNYQKLRRSSTASRCIHDHHCGSQASSVKQSRTNLSSMELPFRNDFAQPQPMKTFNSTFKKSSYTFKQAHECPEQALEDRVMEEIPCEIYVRGRDDSAQASISIDF</sequence>
<gene>
    <name type="primary">Neto2</name>
    <name type="synonym">Btcl2</name>
</gene>
<comment type="function">
    <text evidence="1">Accessory subunit of neuronal kainate-sensitive glutamate receptors, GRIK2 and GRIK3. Increases kainate-receptor channel activity, slowing the decay kinetics of the receptors, without affecting their expression at the cell surface, and increasing the open probability of the receptor channels. Modulates the agonist sensitivity of kainate receptors. Slows the decay of kainate receptor-mediated excitatory postsynaptic currents (EPSCs), thus directly influencing synaptic transmission (By similarity).</text>
</comment>
<comment type="subunit">
    <text evidence="1">Interacts with GRIK2 and GRIK3, but neither with AMPA-nor with NMDA-sensitive glutamate receptors.</text>
</comment>
<comment type="subcellular location">
    <molecule>Isoform 1</molecule>
    <subcellularLocation>
        <location evidence="8">Cell membrane</location>
        <topology evidence="8">Single-pass type I membrane protein</topology>
    </subcellularLocation>
</comment>
<comment type="subcellular location">
    <molecule>Isoform 2</molecule>
    <subcellularLocation>
        <location>Cell membrane</location>
        <topology>Multi-pass membrane protein</topology>
    </subcellularLocation>
</comment>
<comment type="alternative products">
    <event type="alternative splicing"/>
    <isoform>
        <id>Q8BNJ6-1</id>
        <name>1</name>
        <sequence type="displayed"/>
    </isoform>
    <isoform>
        <id>Q8BNJ6-2</id>
        <name>2</name>
        <sequence type="described" ref="VSP_012858 VSP_012859"/>
    </isoform>
</comment>
<comment type="tissue specificity">
    <text evidence="5 6">Expressed in brain tissues, including cerebellar granule cells (at protein level).</text>
</comment>
<comment type="developmental stage">
    <text evidence="5">Observed restrictively in brain throughout embryonic (E) and postnatal stages (P). Expression pattern in brain slightly changes from 13 dpc to P21.</text>
</comment>
<comment type="PTM">
    <text evidence="1">N-glycosylated.</text>
</comment>
<comment type="sequence caution" evidence="8">
    <conflict type="erroneous initiation">
        <sequence resource="EMBL-CDS" id="BAC38225"/>
    </conflict>
</comment>
<accession>Q8BNJ6</accession>
<accession>B2RX93</accession>
<accession>Q5VM49</accession>
<accession>Q8C4Q8</accession>
<evidence type="ECO:0000250" key="1"/>
<evidence type="ECO:0000255" key="2"/>
<evidence type="ECO:0000255" key="3">
    <source>
        <dbReference type="PROSITE-ProRule" id="PRU00059"/>
    </source>
</evidence>
<evidence type="ECO:0000255" key="4">
    <source>
        <dbReference type="PROSITE-ProRule" id="PRU00124"/>
    </source>
</evidence>
<evidence type="ECO:0000269" key="5">
    <source>
    </source>
</evidence>
<evidence type="ECO:0000269" key="6">
    <source>
    </source>
</evidence>
<evidence type="ECO:0000303" key="7">
    <source>
    </source>
</evidence>
<evidence type="ECO:0000305" key="8"/>
<evidence type="ECO:0007744" key="9">
    <source>
    </source>
</evidence>
<proteinExistence type="evidence at protein level"/>
<keyword id="KW-0025">Alternative splicing</keyword>
<keyword id="KW-1003">Cell membrane</keyword>
<keyword id="KW-1015">Disulfide bond</keyword>
<keyword id="KW-0325">Glycoprotein</keyword>
<keyword id="KW-0472">Membrane</keyword>
<keyword id="KW-0597">Phosphoprotein</keyword>
<keyword id="KW-0675">Receptor</keyword>
<keyword id="KW-1185">Reference proteome</keyword>
<keyword id="KW-0677">Repeat</keyword>
<keyword id="KW-0732">Signal</keyword>
<keyword id="KW-0812">Transmembrane</keyword>
<keyword id="KW-1133">Transmembrane helix</keyword>
<reference key="1">
    <citation type="journal article" date="2004" name="Brain Res. Dev. Brain Res.">
        <title>Expression of Btcl2, a novel member of Btcl gene family, during development of the central nervous system.</title>
        <authorList>
            <person name="Michishita M."/>
            <person name="Ikeda T."/>
            <person name="Nakashiba T."/>
            <person name="Ogawa M."/>
            <person name="Tashiro K."/>
            <person name="Honjo T."/>
            <person name="Doi K."/>
            <person name="Itohara S."/>
            <person name="Endo S."/>
        </authorList>
    </citation>
    <scope>NUCLEOTIDE SEQUENCE [MRNA] (ISOFORM 2)</scope>
    <scope>MEMBRANE TOPOLOGY</scope>
    <scope>TISSUE SPECIFICITY</scope>
    <scope>DEVELOPMENTAL STAGE</scope>
    <source>
        <strain>C57BL/6J</strain>
        <tissue>Brain</tissue>
    </source>
</reference>
<reference key="2">
    <citation type="journal article" date="2005" name="Science">
        <title>The transcriptional landscape of the mammalian genome.</title>
        <authorList>
            <person name="Carninci P."/>
            <person name="Kasukawa T."/>
            <person name="Katayama S."/>
            <person name="Gough J."/>
            <person name="Frith M.C."/>
            <person name="Maeda N."/>
            <person name="Oyama R."/>
            <person name="Ravasi T."/>
            <person name="Lenhard B."/>
            <person name="Wells C."/>
            <person name="Kodzius R."/>
            <person name="Shimokawa K."/>
            <person name="Bajic V.B."/>
            <person name="Brenner S.E."/>
            <person name="Batalov S."/>
            <person name="Forrest A.R."/>
            <person name="Zavolan M."/>
            <person name="Davis M.J."/>
            <person name="Wilming L.G."/>
            <person name="Aidinis V."/>
            <person name="Allen J.E."/>
            <person name="Ambesi-Impiombato A."/>
            <person name="Apweiler R."/>
            <person name="Aturaliya R.N."/>
            <person name="Bailey T.L."/>
            <person name="Bansal M."/>
            <person name="Baxter L."/>
            <person name="Beisel K.W."/>
            <person name="Bersano T."/>
            <person name="Bono H."/>
            <person name="Chalk A.M."/>
            <person name="Chiu K.P."/>
            <person name="Choudhary V."/>
            <person name="Christoffels A."/>
            <person name="Clutterbuck D.R."/>
            <person name="Crowe M.L."/>
            <person name="Dalla E."/>
            <person name="Dalrymple B.P."/>
            <person name="de Bono B."/>
            <person name="Della Gatta G."/>
            <person name="di Bernardo D."/>
            <person name="Down T."/>
            <person name="Engstrom P."/>
            <person name="Fagiolini M."/>
            <person name="Faulkner G."/>
            <person name="Fletcher C.F."/>
            <person name="Fukushima T."/>
            <person name="Furuno M."/>
            <person name="Futaki S."/>
            <person name="Gariboldi M."/>
            <person name="Georgii-Hemming P."/>
            <person name="Gingeras T.R."/>
            <person name="Gojobori T."/>
            <person name="Green R.E."/>
            <person name="Gustincich S."/>
            <person name="Harbers M."/>
            <person name="Hayashi Y."/>
            <person name="Hensch T.K."/>
            <person name="Hirokawa N."/>
            <person name="Hill D."/>
            <person name="Huminiecki L."/>
            <person name="Iacono M."/>
            <person name="Ikeo K."/>
            <person name="Iwama A."/>
            <person name="Ishikawa T."/>
            <person name="Jakt M."/>
            <person name="Kanapin A."/>
            <person name="Katoh M."/>
            <person name="Kawasawa Y."/>
            <person name="Kelso J."/>
            <person name="Kitamura H."/>
            <person name="Kitano H."/>
            <person name="Kollias G."/>
            <person name="Krishnan S.P."/>
            <person name="Kruger A."/>
            <person name="Kummerfeld S.K."/>
            <person name="Kurochkin I.V."/>
            <person name="Lareau L.F."/>
            <person name="Lazarevic D."/>
            <person name="Lipovich L."/>
            <person name="Liu J."/>
            <person name="Liuni S."/>
            <person name="McWilliam S."/>
            <person name="Madan Babu M."/>
            <person name="Madera M."/>
            <person name="Marchionni L."/>
            <person name="Matsuda H."/>
            <person name="Matsuzawa S."/>
            <person name="Miki H."/>
            <person name="Mignone F."/>
            <person name="Miyake S."/>
            <person name="Morris K."/>
            <person name="Mottagui-Tabar S."/>
            <person name="Mulder N."/>
            <person name="Nakano N."/>
            <person name="Nakauchi H."/>
            <person name="Ng P."/>
            <person name="Nilsson R."/>
            <person name="Nishiguchi S."/>
            <person name="Nishikawa S."/>
            <person name="Nori F."/>
            <person name="Ohara O."/>
            <person name="Okazaki Y."/>
            <person name="Orlando V."/>
            <person name="Pang K.C."/>
            <person name="Pavan W.J."/>
            <person name="Pavesi G."/>
            <person name="Pesole G."/>
            <person name="Petrovsky N."/>
            <person name="Piazza S."/>
            <person name="Reed J."/>
            <person name="Reid J.F."/>
            <person name="Ring B.Z."/>
            <person name="Ringwald M."/>
            <person name="Rost B."/>
            <person name="Ruan Y."/>
            <person name="Salzberg S.L."/>
            <person name="Sandelin A."/>
            <person name="Schneider C."/>
            <person name="Schoenbach C."/>
            <person name="Sekiguchi K."/>
            <person name="Semple C.A."/>
            <person name="Seno S."/>
            <person name="Sessa L."/>
            <person name="Sheng Y."/>
            <person name="Shibata Y."/>
            <person name="Shimada H."/>
            <person name="Shimada K."/>
            <person name="Silva D."/>
            <person name="Sinclair B."/>
            <person name="Sperling S."/>
            <person name="Stupka E."/>
            <person name="Sugiura K."/>
            <person name="Sultana R."/>
            <person name="Takenaka Y."/>
            <person name="Taki K."/>
            <person name="Tammoja K."/>
            <person name="Tan S.L."/>
            <person name="Tang S."/>
            <person name="Taylor M.S."/>
            <person name="Tegner J."/>
            <person name="Teichmann S.A."/>
            <person name="Ueda H.R."/>
            <person name="van Nimwegen E."/>
            <person name="Verardo R."/>
            <person name="Wei C.L."/>
            <person name="Yagi K."/>
            <person name="Yamanishi H."/>
            <person name="Zabarovsky E."/>
            <person name="Zhu S."/>
            <person name="Zimmer A."/>
            <person name="Hide W."/>
            <person name="Bult C."/>
            <person name="Grimmond S.M."/>
            <person name="Teasdale R.D."/>
            <person name="Liu E.T."/>
            <person name="Brusic V."/>
            <person name="Quackenbush J."/>
            <person name="Wahlestedt C."/>
            <person name="Mattick J.S."/>
            <person name="Hume D.A."/>
            <person name="Kai C."/>
            <person name="Sasaki D."/>
            <person name="Tomaru Y."/>
            <person name="Fukuda S."/>
            <person name="Kanamori-Katayama M."/>
            <person name="Suzuki M."/>
            <person name="Aoki J."/>
            <person name="Arakawa T."/>
            <person name="Iida J."/>
            <person name="Imamura K."/>
            <person name="Itoh M."/>
            <person name="Kato T."/>
            <person name="Kawaji H."/>
            <person name="Kawagashira N."/>
            <person name="Kawashima T."/>
            <person name="Kojima M."/>
            <person name="Kondo S."/>
            <person name="Konno H."/>
            <person name="Nakano K."/>
            <person name="Ninomiya N."/>
            <person name="Nishio T."/>
            <person name="Okada M."/>
            <person name="Plessy C."/>
            <person name="Shibata K."/>
            <person name="Shiraki T."/>
            <person name="Suzuki S."/>
            <person name="Tagami M."/>
            <person name="Waki K."/>
            <person name="Watahiki A."/>
            <person name="Okamura-Oho Y."/>
            <person name="Suzuki H."/>
            <person name="Kawai J."/>
            <person name="Hayashizaki Y."/>
        </authorList>
    </citation>
    <scope>NUCLEOTIDE SEQUENCE [LARGE SCALE MRNA] (ISOFORM 1)</scope>
    <source>
        <strain>C57BL/6J</strain>
        <tissue>Head</tissue>
    </source>
</reference>
<reference key="3">
    <citation type="journal article" date="2004" name="Genome Res.">
        <title>The status, quality, and expansion of the NIH full-length cDNA project: the Mammalian Gene Collection (MGC).</title>
        <authorList>
            <consortium name="The MGC Project Team"/>
        </authorList>
    </citation>
    <scope>NUCLEOTIDE SEQUENCE [LARGE SCALE MRNA] (ISOFORM 1)</scope>
    <source>
        <tissue>Brain</tissue>
    </source>
</reference>
<reference key="4">
    <citation type="journal article" date="2009" name="Neuron">
        <title>A transmembrane accessory subunit that modulates kainate-type glutamate receptors.</title>
        <authorList>
            <person name="Zhang W."/>
            <person name="St-Gelais F."/>
            <person name="Grabner C.P."/>
            <person name="Trinidad J.C."/>
            <person name="Sumioka A."/>
            <person name="Morimoto-Tomita M."/>
            <person name="Kim K.S."/>
            <person name="Straub C."/>
            <person name="Burlingame A.L."/>
            <person name="Howe J.R."/>
            <person name="Tomita S."/>
        </authorList>
    </citation>
    <scope>TISSUE SPECIFICITY</scope>
</reference>
<reference key="5">
    <citation type="journal article" date="2010" name="Cell">
        <title>A tissue-specific atlas of mouse protein phosphorylation and expression.</title>
        <authorList>
            <person name="Huttlin E.L."/>
            <person name="Jedrychowski M.P."/>
            <person name="Elias J.E."/>
            <person name="Goswami T."/>
            <person name="Rad R."/>
            <person name="Beausoleil S.A."/>
            <person name="Villen J."/>
            <person name="Haas W."/>
            <person name="Sowa M.E."/>
            <person name="Gygi S.P."/>
        </authorList>
    </citation>
    <scope>PHOSPHORYLATION [LARGE SCALE ANALYSIS] AT SER-409</scope>
    <scope>IDENTIFICATION BY MASS SPECTROMETRY [LARGE SCALE ANALYSIS]</scope>
    <source>
        <tissue>Brain</tissue>
    </source>
</reference>
<dbReference type="EMBL" id="AY138991">
    <property type="protein sequence ID" value="AAN38319.1"/>
    <property type="molecule type" value="mRNA"/>
</dbReference>
<dbReference type="EMBL" id="AK081462">
    <property type="protein sequence ID" value="BAC38225.1"/>
    <property type="status" value="ALT_INIT"/>
    <property type="molecule type" value="mRNA"/>
</dbReference>
<dbReference type="EMBL" id="AK083512">
    <property type="protein sequence ID" value="BAC38938.1"/>
    <property type="molecule type" value="mRNA"/>
</dbReference>
<dbReference type="EMBL" id="BC151050">
    <property type="protein sequence ID" value="AAI51051.1"/>
    <property type="molecule type" value="mRNA"/>
</dbReference>
<dbReference type="CCDS" id="CCDS40423.1">
    <molecule id="Q8BNJ6-2"/>
</dbReference>
<dbReference type="CCDS" id="CCDS90432.1">
    <molecule id="Q8BNJ6-1"/>
</dbReference>
<dbReference type="RefSeq" id="NP_001074793.1">
    <molecule id="Q8BNJ6-2"/>
    <property type="nucleotide sequence ID" value="NM_001081324.2"/>
</dbReference>
<dbReference type="RefSeq" id="NP_001344217.1">
    <molecule id="Q8BNJ6-1"/>
    <property type="nucleotide sequence ID" value="NM_001357288.1"/>
</dbReference>
<dbReference type="RefSeq" id="XP_006531500.1">
    <molecule id="Q8BNJ6-2"/>
    <property type="nucleotide sequence ID" value="XM_006531437.5"/>
</dbReference>
<dbReference type="RefSeq" id="XP_006531502.1">
    <property type="nucleotide sequence ID" value="XM_006531439.2"/>
</dbReference>
<dbReference type="SMR" id="Q8BNJ6"/>
<dbReference type="BioGRID" id="216811">
    <property type="interactions" value="1"/>
</dbReference>
<dbReference type="CORUM" id="Q8BNJ6"/>
<dbReference type="FunCoup" id="Q8BNJ6">
    <property type="interactions" value="269"/>
</dbReference>
<dbReference type="STRING" id="10090.ENSMUSP00000105308"/>
<dbReference type="GlyCosmos" id="Q8BNJ6">
    <property type="glycosylation" value="1 site, No reported glycans"/>
</dbReference>
<dbReference type="GlyGen" id="Q8BNJ6">
    <property type="glycosylation" value="1 site"/>
</dbReference>
<dbReference type="iPTMnet" id="Q8BNJ6"/>
<dbReference type="PhosphoSitePlus" id="Q8BNJ6"/>
<dbReference type="PaxDb" id="10090-ENSMUSP00000105308"/>
<dbReference type="ProteomicsDB" id="252812">
    <molecule id="Q8BNJ6-1"/>
</dbReference>
<dbReference type="ProteomicsDB" id="252813">
    <molecule id="Q8BNJ6-2"/>
</dbReference>
<dbReference type="Antibodypedia" id="2630">
    <property type="antibodies" value="193 antibodies from 27 providers"/>
</dbReference>
<dbReference type="DNASU" id="74513"/>
<dbReference type="Ensembl" id="ENSMUST00000109686.4">
    <molecule id="Q8BNJ6-2"/>
    <property type="protein sequence ID" value="ENSMUSP00000105308.4"/>
    <property type="gene ID" value="ENSMUSG00000036902.12"/>
</dbReference>
<dbReference type="Ensembl" id="ENSMUST00000216286.2">
    <molecule id="Q8BNJ6-1"/>
    <property type="protein sequence ID" value="ENSMUSP00000150062.2"/>
    <property type="gene ID" value="ENSMUSG00000036902.12"/>
</dbReference>
<dbReference type="GeneID" id="74513"/>
<dbReference type="KEGG" id="mmu:74513"/>
<dbReference type="UCSC" id="uc009mqc.1">
    <molecule id="Q8BNJ6-2"/>
    <property type="organism name" value="mouse"/>
</dbReference>
<dbReference type="UCSC" id="uc009mqe.2">
    <molecule id="Q8BNJ6-1"/>
    <property type="organism name" value="mouse"/>
</dbReference>
<dbReference type="AGR" id="MGI:1921763"/>
<dbReference type="CTD" id="81831"/>
<dbReference type="MGI" id="MGI:1921763">
    <property type="gene designation" value="Neto2"/>
</dbReference>
<dbReference type="VEuPathDB" id="HostDB:ENSMUSG00000036902"/>
<dbReference type="eggNOG" id="ENOG502QW0Z">
    <property type="taxonomic scope" value="Eukaryota"/>
</dbReference>
<dbReference type="GeneTree" id="ENSGT00940000156041"/>
<dbReference type="HOGENOM" id="CLU_015228_0_1_1"/>
<dbReference type="InParanoid" id="Q8BNJ6"/>
<dbReference type="OMA" id="KECIYVL"/>
<dbReference type="OrthoDB" id="9971251at2759"/>
<dbReference type="PhylomeDB" id="Q8BNJ6"/>
<dbReference type="BioGRID-ORCS" id="74513">
    <property type="hits" value="0 hits in 47 CRISPR screens"/>
</dbReference>
<dbReference type="ChiTaRS" id="Neto2">
    <property type="organism name" value="mouse"/>
</dbReference>
<dbReference type="PRO" id="PR:Q8BNJ6"/>
<dbReference type="Proteomes" id="UP000000589">
    <property type="component" value="Chromosome 8"/>
</dbReference>
<dbReference type="RNAct" id="Q8BNJ6">
    <property type="molecule type" value="protein"/>
</dbReference>
<dbReference type="Bgee" id="ENSMUSG00000036902">
    <property type="expression patterns" value="Expressed in cortical plate and 211 other cell types or tissues"/>
</dbReference>
<dbReference type="ExpressionAtlas" id="Q8BNJ6">
    <property type="expression patterns" value="baseline and differential"/>
</dbReference>
<dbReference type="GO" id="GO:0098978">
    <property type="term" value="C:glutamatergic synapse"/>
    <property type="evidence" value="ECO:0000314"/>
    <property type="project" value="SynGO"/>
</dbReference>
<dbReference type="GO" id="GO:0014069">
    <property type="term" value="C:postsynaptic density"/>
    <property type="evidence" value="ECO:0000314"/>
    <property type="project" value="MGI"/>
</dbReference>
<dbReference type="GO" id="GO:0098839">
    <property type="term" value="C:postsynaptic density membrane"/>
    <property type="evidence" value="ECO:0000314"/>
    <property type="project" value="SynGO"/>
</dbReference>
<dbReference type="GO" id="GO:0045202">
    <property type="term" value="C:synapse"/>
    <property type="evidence" value="ECO:0000314"/>
    <property type="project" value="MGI"/>
</dbReference>
<dbReference type="GO" id="GO:0035255">
    <property type="term" value="F:ionotropic glutamate receptor binding"/>
    <property type="evidence" value="ECO:0000353"/>
    <property type="project" value="MGI"/>
</dbReference>
<dbReference type="GO" id="GO:0099645">
    <property type="term" value="P:neurotransmitter receptor localization to postsynaptic specialization membrane"/>
    <property type="evidence" value="ECO:0007669"/>
    <property type="project" value="Ensembl"/>
</dbReference>
<dbReference type="GO" id="GO:0098696">
    <property type="term" value="P:regulation of neurotransmitter receptor localization to postsynaptic specialization membrane"/>
    <property type="evidence" value="ECO:0007669"/>
    <property type="project" value="Ensembl"/>
</dbReference>
<dbReference type="CDD" id="cd00041">
    <property type="entry name" value="CUB"/>
    <property type="match status" value="2"/>
</dbReference>
<dbReference type="CDD" id="cd00112">
    <property type="entry name" value="LDLa"/>
    <property type="match status" value="1"/>
</dbReference>
<dbReference type="FunFam" id="2.60.120.290:FF:000016">
    <property type="entry name" value="neuropilin and tolloid-like protein 2"/>
    <property type="match status" value="1"/>
</dbReference>
<dbReference type="FunFam" id="2.60.120.290:FF:000020">
    <property type="entry name" value="Neuropilin and tolloid-like protein 2 isoform 1"/>
    <property type="match status" value="1"/>
</dbReference>
<dbReference type="Gene3D" id="4.10.400.10">
    <property type="entry name" value="Low-density Lipoprotein Receptor"/>
    <property type="match status" value="1"/>
</dbReference>
<dbReference type="Gene3D" id="2.60.120.290">
    <property type="entry name" value="Spermadhesin, CUB domain"/>
    <property type="match status" value="2"/>
</dbReference>
<dbReference type="InterPro" id="IPR000859">
    <property type="entry name" value="CUB_dom"/>
</dbReference>
<dbReference type="InterPro" id="IPR036055">
    <property type="entry name" value="LDL_receptor-like_sf"/>
</dbReference>
<dbReference type="InterPro" id="IPR023415">
    <property type="entry name" value="LDLR_class-A_CS"/>
</dbReference>
<dbReference type="InterPro" id="IPR002172">
    <property type="entry name" value="LDrepeatLR_classA_rpt"/>
</dbReference>
<dbReference type="InterPro" id="IPR035914">
    <property type="entry name" value="Sperma_CUB_dom_sf"/>
</dbReference>
<dbReference type="PANTHER" id="PTHR24251:SF26">
    <property type="entry name" value="NEUROPILIN AND TOLLOID-LIKE PROTEIN 2"/>
    <property type="match status" value="1"/>
</dbReference>
<dbReference type="PANTHER" id="PTHR24251">
    <property type="entry name" value="OVOCHYMASE-RELATED"/>
    <property type="match status" value="1"/>
</dbReference>
<dbReference type="Pfam" id="PF00431">
    <property type="entry name" value="CUB"/>
    <property type="match status" value="2"/>
</dbReference>
<dbReference type="Pfam" id="PF00057">
    <property type="entry name" value="Ldl_recept_a"/>
    <property type="match status" value="1"/>
</dbReference>
<dbReference type="SMART" id="SM00042">
    <property type="entry name" value="CUB"/>
    <property type="match status" value="2"/>
</dbReference>
<dbReference type="SMART" id="SM00192">
    <property type="entry name" value="LDLa"/>
    <property type="match status" value="1"/>
</dbReference>
<dbReference type="SUPFAM" id="SSF57424">
    <property type="entry name" value="LDL receptor-like module"/>
    <property type="match status" value="1"/>
</dbReference>
<dbReference type="SUPFAM" id="SSF49854">
    <property type="entry name" value="Spermadhesin, CUB domain"/>
    <property type="match status" value="2"/>
</dbReference>
<dbReference type="PROSITE" id="PS01180">
    <property type="entry name" value="CUB"/>
    <property type="match status" value="2"/>
</dbReference>
<dbReference type="PROSITE" id="PS01209">
    <property type="entry name" value="LDLRA_1"/>
    <property type="match status" value="1"/>
</dbReference>
<dbReference type="PROSITE" id="PS50068">
    <property type="entry name" value="LDLRA_2"/>
    <property type="match status" value="1"/>
</dbReference>